<feature type="chain" id="PRO_0000128816" description="4-hydroxy-3-methylbut-2-enyl diphosphate reductase">
    <location>
        <begin position="1"/>
        <end position="328"/>
    </location>
</feature>
<feature type="active site" description="Proton donor" evidence="1">
    <location>
        <position position="140"/>
    </location>
</feature>
<feature type="binding site" evidence="1">
    <location>
        <position position="24"/>
    </location>
    <ligand>
        <name>[4Fe-4S] cluster</name>
        <dbReference type="ChEBI" id="CHEBI:49883"/>
    </ligand>
</feature>
<feature type="binding site" evidence="1">
    <location>
        <position position="55"/>
    </location>
    <ligand>
        <name>(2E)-4-hydroxy-3-methylbut-2-enyl diphosphate</name>
        <dbReference type="ChEBI" id="CHEBI:128753"/>
    </ligand>
</feature>
<feature type="binding site" evidence="1">
    <location>
        <position position="55"/>
    </location>
    <ligand>
        <name>dimethylallyl diphosphate</name>
        <dbReference type="ChEBI" id="CHEBI:57623"/>
    </ligand>
</feature>
<feature type="binding site" evidence="1">
    <location>
        <position position="55"/>
    </location>
    <ligand>
        <name>isopentenyl diphosphate</name>
        <dbReference type="ChEBI" id="CHEBI:128769"/>
    </ligand>
</feature>
<feature type="binding site" evidence="1">
    <location>
        <position position="88"/>
    </location>
    <ligand>
        <name>(2E)-4-hydroxy-3-methylbut-2-enyl diphosphate</name>
        <dbReference type="ChEBI" id="CHEBI:128753"/>
    </ligand>
</feature>
<feature type="binding site" evidence="1">
    <location>
        <position position="88"/>
    </location>
    <ligand>
        <name>dimethylallyl diphosphate</name>
        <dbReference type="ChEBI" id="CHEBI:57623"/>
    </ligand>
</feature>
<feature type="binding site" evidence="1">
    <location>
        <position position="88"/>
    </location>
    <ligand>
        <name>isopentenyl diphosphate</name>
        <dbReference type="ChEBI" id="CHEBI:128769"/>
    </ligand>
</feature>
<feature type="binding site" evidence="1">
    <location>
        <position position="110"/>
    </location>
    <ligand>
        <name>[4Fe-4S] cluster</name>
        <dbReference type="ChEBI" id="CHEBI:49883"/>
    </ligand>
</feature>
<feature type="binding site" evidence="1">
    <location>
        <position position="138"/>
    </location>
    <ligand>
        <name>(2E)-4-hydroxy-3-methylbut-2-enyl diphosphate</name>
        <dbReference type="ChEBI" id="CHEBI:128753"/>
    </ligand>
</feature>
<feature type="binding site" evidence="1">
    <location>
        <position position="138"/>
    </location>
    <ligand>
        <name>dimethylallyl diphosphate</name>
        <dbReference type="ChEBI" id="CHEBI:57623"/>
    </ligand>
</feature>
<feature type="binding site" evidence="1">
    <location>
        <position position="138"/>
    </location>
    <ligand>
        <name>isopentenyl diphosphate</name>
        <dbReference type="ChEBI" id="CHEBI:128769"/>
    </ligand>
</feature>
<feature type="binding site" evidence="1">
    <location>
        <position position="178"/>
    </location>
    <ligand>
        <name>(2E)-4-hydroxy-3-methylbut-2-enyl diphosphate</name>
        <dbReference type="ChEBI" id="CHEBI:128753"/>
    </ligand>
</feature>
<feature type="binding site" evidence="1">
    <location>
        <position position="208"/>
    </location>
    <ligand>
        <name>[4Fe-4S] cluster</name>
        <dbReference type="ChEBI" id="CHEBI:49883"/>
    </ligand>
</feature>
<feature type="binding site" evidence="1">
    <location>
        <position position="236"/>
    </location>
    <ligand>
        <name>(2E)-4-hydroxy-3-methylbut-2-enyl diphosphate</name>
        <dbReference type="ChEBI" id="CHEBI:128753"/>
    </ligand>
</feature>
<feature type="binding site" evidence="1">
    <location>
        <position position="236"/>
    </location>
    <ligand>
        <name>dimethylallyl diphosphate</name>
        <dbReference type="ChEBI" id="CHEBI:57623"/>
    </ligand>
</feature>
<feature type="binding site" evidence="1">
    <location>
        <position position="236"/>
    </location>
    <ligand>
        <name>isopentenyl diphosphate</name>
        <dbReference type="ChEBI" id="CHEBI:128769"/>
    </ligand>
</feature>
<feature type="binding site" evidence="1">
    <location>
        <position position="237"/>
    </location>
    <ligand>
        <name>(2E)-4-hydroxy-3-methylbut-2-enyl diphosphate</name>
        <dbReference type="ChEBI" id="CHEBI:128753"/>
    </ligand>
</feature>
<feature type="binding site" evidence="1">
    <location>
        <position position="237"/>
    </location>
    <ligand>
        <name>dimethylallyl diphosphate</name>
        <dbReference type="ChEBI" id="CHEBI:57623"/>
    </ligand>
</feature>
<feature type="binding site" evidence="1">
    <location>
        <position position="237"/>
    </location>
    <ligand>
        <name>isopentenyl diphosphate</name>
        <dbReference type="ChEBI" id="CHEBI:128769"/>
    </ligand>
</feature>
<feature type="binding site" evidence="1">
    <location>
        <position position="238"/>
    </location>
    <ligand>
        <name>(2E)-4-hydroxy-3-methylbut-2-enyl diphosphate</name>
        <dbReference type="ChEBI" id="CHEBI:128753"/>
    </ligand>
</feature>
<feature type="binding site" evidence="1">
    <location>
        <position position="238"/>
    </location>
    <ligand>
        <name>dimethylallyl diphosphate</name>
        <dbReference type="ChEBI" id="CHEBI:57623"/>
    </ligand>
</feature>
<feature type="binding site" evidence="1">
    <location>
        <position position="238"/>
    </location>
    <ligand>
        <name>isopentenyl diphosphate</name>
        <dbReference type="ChEBI" id="CHEBI:128769"/>
    </ligand>
</feature>
<feature type="binding site" evidence="1">
    <location>
        <position position="279"/>
    </location>
    <ligand>
        <name>(2E)-4-hydroxy-3-methylbut-2-enyl diphosphate</name>
        <dbReference type="ChEBI" id="CHEBI:128753"/>
    </ligand>
</feature>
<feature type="binding site" evidence="1">
    <location>
        <position position="279"/>
    </location>
    <ligand>
        <name>dimethylallyl diphosphate</name>
        <dbReference type="ChEBI" id="CHEBI:57623"/>
    </ligand>
</feature>
<feature type="binding site" evidence="1">
    <location>
        <position position="279"/>
    </location>
    <ligand>
        <name>isopentenyl diphosphate</name>
        <dbReference type="ChEBI" id="CHEBI:128769"/>
    </ligand>
</feature>
<proteinExistence type="inferred from homology"/>
<accession>Q5HB13</accession>
<accession>Q5FEL8</accession>
<sequence>MHNAIYTDLQKEVEVILARPRGFCAGVSRAIEIVKLAIEYYKDTKTIYVLHEIVHNKYIVETLKTMGVIFIDKVDQAQDGSVLIYSAHGVSKSIKQLAELRDLEVIDATCPLVNKVHKEVQLYDKSGYQVILIGHKGHREVEGTVGQISTPVIIVQNLNDIDKIEIFDPDKLAYVTQTTLSVDDTKVIIDKLKKKFPNIKGPDLKDICYATQNRQTTTKRLAELVDIVFILGSKNSSNSNRLKELAGIQTQAFLIDSYKEIDLNLLNDITKIGITAGASAPDILVQQVIDFLKQHMKVKLSDLEIVQESVTFNVPRQLRQYKEQYNPI</sequence>
<reference key="1">
    <citation type="journal article" date="2005" name="Proc. Natl. Acad. Sci. U.S.A.">
        <title>The genome of the heartwater agent Ehrlichia ruminantium contains multiple tandem repeats of actively variable copy number.</title>
        <authorList>
            <person name="Collins N.E."/>
            <person name="Liebenberg J."/>
            <person name="de Villiers E.P."/>
            <person name="Brayton K.A."/>
            <person name="Louw E."/>
            <person name="Pretorius A."/>
            <person name="Faber F.E."/>
            <person name="van Heerden H."/>
            <person name="Josemans A."/>
            <person name="van Kleef M."/>
            <person name="Steyn H.C."/>
            <person name="van Strijp M.F."/>
            <person name="Zweygarth E."/>
            <person name="Jongejan F."/>
            <person name="Maillard J.C."/>
            <person name="Berthier D."/>
            <person name="Botha M."/>
            <person name="Joubert F."/>
            <person name="Corton C.H."/>
            <person name="Thomson N.R."/>
            <person name="Allsopp M.T."/>
            <person name="Allsopp B.A."/>
        </authorList>
    </citation>
    <scope>NUCLEOTIDE SEQUENCE [LARGE SCALE GENOMIC DNA]</scope>
    <source>
        <strain>Welgevonden</strain>
    </source>
</reference>
<reference key="2">
    <citation type="journal article" date="2006" name="J. Bacteriol.">
        <title>Comparative genomic analysis of three strains of Ehrlichia ruminantium reveals an active process of genome size plasticity.</title>
        <authorList>
            <person name="Frutos R."/>
            <person name="Viari A."/>
            <person name="Ferraz C."/>
            <person name="Morgat A."/>
            <person name="Eychenie S."/>
            <person name="Kandassamy Y."/>
            <person name="Chantal I."/>
            <person name="Bensaid A."/>
            <person name="Coissac E."/>
            <person name="Vachiery N."/>
            <person name="Demaille J."/>
            <person name="Martinez D."/>
        </authorList>
    </citation>
    <scope>NUCLEOTIDE SEQUENCE [LARGE SCALE GENOMIC DNA]</scope>
    <source>
        <strain>Welgevonden</strain>
    </source>
</reference>
<evidence type="ECO:0000255" key="1">
    <source>
        <dbReference type="HAMAP-Rule" id="MF_00191"/>
    </source>
</evidence>
<evidence type="ECO:0000305" key="2"/>
<protein>
    <recommendedName>
        <fullName evidence="1">4-hydroxy-3-methylbut-2-enyl diphosphate reductase</fullName>
        <shortName evidence="1">HMBPP reductase</shortName>
        <ecNumber evidence="1">1.17.7.4</ecNumber>
    </recommendedName>
</protein>
<comment type="function">
    <text evidence="1">Catalyzes the conversion of 1-hydroxy-2-methyl-2-(E)-butenyl 4-diphosphate (HMBPP) into a mixture of isopentenyl diphosphate (IPP) and dimethylallyl diphosphate (DMAPP). Acts in the terminal step of the DOXP/MEP pathway for isoprenoid precursor biosynthesis.</text>
</comment>
<comment type="catalytic activity">
    <reaction evidence="1">
        <text>isopentenyl diphosphate + 2 oxidized [2Fe-2S]-[ferredoxin] + H2O = (2E)-4-hydroxy-3-methylbut-2-enyl diphosphate + 2 reduced [2Fe-2S]-[ferredoxin] + 2 H(+)</text>
        <dbReference type="Rhea" id="RHEA:24488"/>
        <dbReference type="Rhea" id="RHEA-COMP:10000"/>
        <dbReference type="Rhea" id="RHEA-COMP:10001"/>
        <dbReference type="ChEBI" id="CHEBI:15377"/>
        <dbReference type="ChEBI" id="CHEBI:15378"/>
        <dbReference type="ChEBI" id="CHEBI:33737"/>
        <dbReference type="ChEBI" id="CHEBI:33738"/>
        <dbReference type="ChEBI" id="CHEBI:128753"/>
        <dbReference type="ChEBI" id="CHEBI:128769"/>
        <dbReference type="EC" id="1.17.7.4"/>
    </reaction>
</comment>
<comment type="catalytic activity">
    <reaction evidence="1">
        <text>dimethylallyl diphosphate + 2 oxidized [2Fe-2S]-[ferredoxin] + H2O = (2E)-4-hydroxy-3-methylbut-2-enyl diphosphate + 2 reduced [2Fe-2S]-[ferredoxin] + 2 H(+)</text>
        <dbReference type="Rhea" id="RHEA:24825"/>
        <dbReference type="Rhea" id="RHEA-COMP:10000"/>
        <dbReference type="Rhea" id="RHEA-COMP:10001"/>
        <dbReference type="ChEBI" id="CHEBI:15377"/>
        <dbReference type="ChEBI" id="CHEBI:15378"/>
        <dbReference type="ChEBI" id="CHEBI:33737"/>
        <dbReference type="ChEBI" id="CHEBI:33738"/>
        <dbReference type="ChEBI" id="CHEBI:57623"/>
        <dbReference type="ChEBI" id="CHEBI:128753"/>
        <dbReference type="EC" id="1.17.7.4"/>
    </reaction>
</comment>
<comment type="cofactor">
    <cofactor evidence="1">
        <name>[4Fe-4S] cluster</name>
        <dbReference type="ChEBI" id="CHEBI:49883"/>
    </cofactor>
    <text evidence="1">Binds 1 [4Fe-4S] cluster per subunit.</text>
</comment>
<comment type="pathway">
    <text evidence="1">Isoprenoid biosynthesis; dimethylallyl diphosphate biosynthesis; dimethylallyl diphosphate from (2E)-4-hydroxy-3-methylbutenyl diphosphate: step 1/1.</text>
</comment>
<comment type="pathway">
    <text evidence="1">Isoprenoid biosynthesis; isopentenyl diphosphate biosynthesis via DXP pathway; isopentenyl diphosphate from 1-deoxy-D-xylulose 5-phosphate: step 6/6.</text>
</comment>
<comment type="similarity">
    <text evidence="1">Belongs to the IspH family.</text>
</comment>
<comment type="sequence caution" evidence="2">
    <conflict type="erroneous initiation">
        <sequence resource="EMBL-CDS" id="CAI27037"/>
    </conflict>
</comment>
<keyword id="KW-0004">4Fe-4S</keyword>
<keyword id="KW-0408">Iron</keyword>
<keyword id="KW-0411">Iron-sulfur</keyword>
<keyword id="KW-0414">Isoprene biosynthesis</keyword>
<keyword id="KW-0479">Metal-binding</keyword>
<keyword id="KW-0560">Oxidoreductase</keyword>
<organism>
    <name type="scientific">Ehrlichia ruminantium (strain Welgevonden)</name>
    <dbReference type="NCBI Taxonomy" id="254945"/>
    <lineage>
        <taxon>Bacteria</taxon>
        <taxon>Pseudomonadati</taxon>
        <taxon>Pseudomonadota</taxon>
        <taxon>Alphaproteobacteria</taxon>
        <taxon>Rickettsiales</taxon>
        <taxon>Anaplasmataceae</taxon>
        <taxon>Ehrlichia</taxon>
    </lineage>
</organism>
<gene>
    <name evidence="1" type="primary">ispH</name>
    <name type="ordered locus">Erum5180</name>
    <name type="ordered locus">ERWE_CDS_05430</name>
</gene>
<dbReference type="EC" id="1.17.7.4" evidence="1"/>
<dbReference type="EMBL" id="CR767821">
    <property type="protein sequence ID" value="CAH58247.1"/>
    <property type="molecule type" value="Genomic_DNA"/>
</dbReference>
<dbReference type="EMBL" id="CR925678">
    <property type="protein sequence ID" value="CAI27037.1"/>
    <property type="status" value="ALT_INIT"/>
    <property type="molecule type" value="Genomic_DNA"/>
</dbReference>
<dbReference type="RefSeq" id="WP_011155198.1">
    <property type="nucleotide sequence ID" value="NC_005295.2"/>
</dbReference>
<dbReference type="SMR" id="Q5HB13"/>
<dbReference type="GeneID" id="33058245"/>
<dbReference type="KEGG" id="eru:Erum5180"/>
<dbReference type="KEGG" id="erw:ERWE_CDS_05430"/>
<dbReference type="eggNOG" id="COG0761">
    <property type="taxonomic scope" value="Bacteria"/>
</dbReference>
<dbReference type="HOGENOM" id="CLU_027486_1_0_5"/>
<dbReference type="UniPathway" id="UPA00056">
    <property type="reaction ID" value="UER00097"/>
</dbReference>
<dbReference type="UniPathway" id="UPA00059">
    <property type="reaction ID" value="UER00105"/>
</dbReference>
<dbReference type="Proteomes" id="UP000001021">
    <property type="component" value="Chromosome"/>
</dbReference>
<dbReference type="GO" id="GO:0051539">
    <property type="term" value="F:4 iron, 4 sulfur cluster binding"/>
    <property type="evidence" value="ECO:0007669"/>
    <property type="project" value="UniProtKB-UniRule"/>
</dbReference>
<dbReference type="GO" id="GO:0051745">
    <property type="term" value="F:4-hydroxy-3-methylbut-2-enyl diphosphate reductase activity"/>
    <property type="evidence" value="ECO:0007669"/>
    <property type="project" value="UniProtKB-UniRule"/>
</dbReference>
<dbReference type="GO" id="GO:0046872">
    <property type="term" value="F:metal ion binding"/>
    <property type="evidence" value="ECO:0007669"/>
    <property type="project" value="UniProtKB-KW"/>
</dbReference>
<dbReference type="GO" id="GO:0050992">
    <property type="term" value="P:dimethylallyl diphosphate biosynthetic process"/>
    <property type="evidence" value="ECO:0007669"/>
    <property type="project" value="UniProtKB-UniRule"/>
</dbReference>
<dbReference type="GO" id="GO:0019288">
    <property type="term" value="P:isopentenyl diphosphate biosynthetic process, methylerythritol 4-phosphate pathway"/>
    <property type="evidence" value="ECO:0007669"/>
    <property type="project" value="UniProtKB-UniRule"/>
</dbReference>
<dbReference type="GO" id="GO:0016114">
    <property type="term" value="P:terpenoid biosynthetic process"/>
    <property type="evidence" value="ECO:0007669"/>
    <property type="project" value="UniProtKB-UniRule"/>
</dbReference>
<dbReference type="CDD" id="cd13944">
    <property type="entry name" value="lytB_ispH"/>
    <property type="match status" value="1"/>
</dbReference>
<dbReference type="Gene3D" id="3.40.50.11270">
    <property type="match status" value="1"/>
</dbReference>
<dbReference type="Gene3D" id="3.40.1010.20">
    <property type="entry name" value="4-hydroxy-3-methylbut-2-enyl diphosphate reductase, catalytic domain"/>
    <property type="match status" value="2"/>
</dbReference>
<dbReference type="HAMAP" id="MF_00191">
    <property type="entry name" value="IspH"/>
    <property type="match status" value="1"/>
</dbReference>
<dbReference type="InterPro" id="IPR003451">
    <property type="entry name" value="LytB/IspH"/>
</dbReference>
<dbReference type="NCBIfam" id="TIGR00216">
    <property type="entry name" value="ispH_lytB"/>
    <property type="match status" value="1"/>
</dbReference>
<dbReference type="NCBIfam" id="NF002188">
    <property type="entry name" value="PRK01045.1-2"/>
    <property type="match status" value="1"/>
</dbReference>
<dbReference type="NCBIfam" id="NF002190">
    <property type="entry name" value="PRK01045.1-4"/>
    <property type="match status" value="1"/>
</dbReference>
<dbReference type="PANTHER" id="PTHR30426">
    <property type="entry name" value="4-HYDROXY-3-METHYLBUT-2-ENYL DIPHOSPHATE REDUCTASE"/>
    <property type="match status" value="1"/>
</dbReference>
<dbReference type="PANTHER" id="PTHR30426:SF0">
    <property type="entry name" value="4-HYDROXY-3-METHYLBUT-2-ENYL DIPHOSPHATE REDUCTASE"/>
    <property type="match status" value="1"/>
</dbReference>
<dbReference type="Pfam" id="PF02401">
    <property type="entry name" value="LYTB"/>
    <property type="match status" value="1"/>
</dbReference>
<name>ISPH_EHRRW</name>